<comment type="catalytic activity">
    <reaction evidence="1">
        <text>L-histidinol phosphate + 2-oxoglutarate = 3-(imidazol-4-yl)-2-oxopropyl phosphate + L-glutamate</text>
        <dbReference type="Rhea" id="RHEA:23744"/>
        <dbReference type="ChEBI" id="CHEBI:16810"/>
        <dbReference type="ChEBI" id="CHEBI:29985"/>
        <dbReference type="ChEBI" id="CHEBI:57766"/>
        <dbReference type="ChEBI" id="CHEBI:57980"/>
        <dbReference type="EC" id="2.6.1.9"/>
    </reaction>
</comment>
<comment type="cofactor">
    <cofactor evidence="1">
        <name>pyridoxal 5'-phosphate</name>
        <dbReference type="ChEBI" id="CHEBI:597326"/>
    </cofactor>
</comment>
<comment type="pathway">
    <text evidence="1">Amino-acid biosynthesis; L-histidine biosynthesis; L-histidine from 5-phospho-alpha-D-ribose 1-diphosphate: step 7/9.</text>
</comment>
<comment type="similarity">
    <text evidence="1">Belongs to the class-II pyridoxal-phosphate-dependent aminotransferase family. Histidinol-phosphate aminotransferase subfamily.</text>
</comment>
<reference key="1">
    <citation type="submission" date="2007-03" db="EMBL/GenBank/DDBJ databases">
        <title>Complete sequence of chromosome of Methanococcus maripaludis C5.</title>
        <authorList>
            <consortium name="US DOE Joint Genome Institute"/>
            <person name="Copeland A."/>
            <person name="Lucas S."/>
            <person name="Lapidus A."/>
            <person name="Barry K."/>
            <person name="Glavina del Rio T."/>
            <person name="Dalin E."/>
            <person name="Tice H."/>
            <person name="Pitluck S."/>
            <person name="Chertkov O."/>
            <person name="Brettin T."/>
            <person name="Bruce D."/>
            <person name="Han C."/>
            <person name="Detter J.C."/>
            <person name="Schmutz J."/>
            <person name="Larimer F."/>
            <person name="Land M."/>
            <person name="Hauser L."/>
            <person name="Kyrpides N."/>
            <person name="Mikhailova N."/>
            <person name="Sieprawska-Lupa M."/>
            <person name="Whitman W.B."/>
            <person name="Richardson P."/>
        </authorList>
    </citation>
    <scope>NUCLEOTIDE SEQUENCE [LARGE SCALE GENOMIC DNA]</scope>
    <source>
        <strain>C5 / ATCC BAA-1333</strain>
    </source>
</reference>
<proteinExistence type="inferred from homology"/>
<name>HIS8_METM5</name>
<protein>
    <recommendedName>
        <fullName evidence="1">Histidinol-phosphate aminotransferase</fullName>
        <ecNumber evidence="1">2.6.1.9</ecNumber>
    </recommendedName>
    <alternativeName>
        <fullName evidence="1">Imidazole acetol-phosphate transaminase</fullName>
    </alternativeName>
</protein>
<keyword id="KW-0028">Amino-acid biosynthesis</keyword>
<keyword id="KW-0032">Aminotransferase</keyword>
<keyword id="KW-0368">Histidine biosynthesis</keyword>
<keyword id="KW-0663">Pyridoxal phosphate</keyword>
<keyword id="KW-0808">Transferase</keyword>
<dbReference type="EC" id="2.6.1.9" evidence="1"/>
<dbReference type="EMBL" id="CP000609">
    <property type="protein sequence ID" value="ABO34690.1"/>
    <property type="molecule type" value="Genomic_DNA"/>
</dbReference>
<dbReference type="RefSeq" id="WP_011868145.1">
    <property type="nucleotide sequence ID" value="NC_009135.1"/>
</dbReference>
<dbReference type="SMR" id="A4FWW1"/>
<dbReference type="STRING" id="402880.MmarC5_0374"/>
<dbReference type="GeneID" id="4928519"/>
<dbReference type="KEGG" id="mmq:MmarC5_0374"/>
<dbReference type="eggNOG" id="arCOG04273">
    <property type="taxonomic scope" value="Archaea"/>
</dbReference>
<dbReference type="HOGENOM" id="CLU_017584_3_3_2"/>
<dbReference type="OrthoDB" id="9929at2157"/>
<dbReference type="UniPathway" id="UPA00031">
    <property type="reaction ID" value="UER00012"/>
</dbReference>
<dbReference type="Proteomes" id="UP000000253">
    <property type="component" value="Chromosome"/>
</dbReference>
<dbReference type="GO" id="GO:0004400">
    <property type="term" value="F:histidinol-phosphate transaminase activity"/>
    <property type="evidence" value="ECO:0007669"/>
    <property type="project" value="UniProtKB-UniRule"/>
</dbReference>
<dbReference type="GO" id="GO:0030170">
    <property type="term" value="F:pyridoxal phosphate binding"/>
    <property type="evidence" value="ECO:0007669"/>
    <property type="project" value="InterPro"/>
</dbReference>
<dbReference type="GO" id="GO:0000105">
    <property type="term" value="P:L-histidine biosynthetic process"/>
    <property type="evidence" value="ECO:0007669"/>
    <property type="project" value="UniProtKB-UniRule"/>
</dbReference>
<dbReference type="CDD" id="cd00609">
    <property type="entry name" value="AAT_like"/>
    <property type="match status" value="1"/>
</dbReference>
<dbReference type="Gene3D" id="3.90.1150.10">
    <property type="entry name" value="Aspartate Aminotransferase, domain 1"/>
    <property type="match status" value="1"/>
</dbReference>
<dbReference type="Gene3D" id="3.40.640.10">
    <property type="entry name" value="Type I PLP-dependent aspartate aminotransferase-like (Major domain)"/>
    <property type="match status" value="1"/>
</dbReference>
<dbReference type="HAMAP" id="MF_01023">
    <property type="entry name" value="HisC_aminotrans_2"/>
    <property type="match status" value="1"/>
</dbReference>
<dbReference type="InterPro" id="IPR004839">
    <property type="entry name" value="Aminotransferase_I/II_large"/>
</dbReference>
<dbReference type="InterPro" id="IPR005861">
    <property type="entry name" value="HisP_aminotrans"/>
</dbReference>
<dbReference type="InterPro" id="IPR015424">
    <property type="entry name" value="PyrdxlP-dep_Trfase"/>
</dbReference>
<dbReference type="InterPro" id="IPR015421">
    <property type="entry name" value="PyrdxlP-dep_Trfase_major"/>
</dbReference>
<dbReference type="InterPro" id="IPR015422">
    <property type="entry name" value="PyrdxlP-dep_Trfase_small"/>
</dbReference>
<dbReference type="NCBIfam" id="TIGR01141">
    <property type="entry name" value="hisC"/>
    <property type="match status" value="1"/>
</dbReference>
<dbReference type="PANTHER" id="PTHR42885:SF2">
    <property type="entry name" value="HISTIDINOL-PHOSPHATE AMINOTRANSFERASE"/>
    <property type="match status" value="1"/>
</dbReference>
<dbReference type="PANTHER" id="PTHR42885">
    <property type="entry name" value="HISTIDINOL-PHOSPHATE AMINOTRANSFERASE-RELATED"/>
    <property type="match status" value="1"/>
</dbReference>
<dbReference type="Pfam" id="PF00155">
    <property type="entry name" value="Aminotran_1_2"/>
    <property type="match status" value="1"/>
</dbReference>
<dbReference type="SUPFAM" id="SSF53383">
    <property type="entry name" value="PLP-dependent transferases"/>
    <property type="match status" value="1"/>
</dbReference>
<accession>A4FWW1</accession>
<evidence type="ECO:0000255" key="1">
    <source>
        <dbReference type="HAMAP-Rule" id="MF_01023"/>
    </source>
</evidence>
<sequence>MSIDDKVRAIVKEFKAYVPGKSKEEIARNYGIDPEKIIKLGSNENPWGCSPKIAEKLMNEVSNLHQYPQPINPELMDEISKFTKMPTENIIVGGDGADEVIDNIMRILIDEGDEVIIPIPTFTQYAISAKIHGANIKWAKFDEENGFKLDVESVLNNITEKTKVIFLCTPNNPTGNVIPTEDIKKIVESTDALVMIDHAYIEYSKGEYDLTNWALKYDNVLVLRTFSKVFGLAGQRVGFGVTSKKIVDYMMRIKPIFSLTRASQVSAITALQDKEFFDRCLKEGIESREQIYNGLKKFKQLEVYPTEANYMLVKVKNGMNSSEFCEALLKKGVIVRDCYSFEGLEPYYFRISIGTFEENERFLKIMSEIVE</sequence>
<organism>
    <name type="scientific">Methanococcus maripaludis (strain C5 / ATCC BAA-1333)</name>
    <dbReference type="NCBI Taxonomy" id="402880"/>
    <lineage>
        <taxon>Archaea</taxon>
        <taxon>Methanobacteriati</taxon>
        <taxon>Methanobacteriota</taxon>
        <taxon>Methanomada group</taxon>
        <taxon>Methanococci</taxon>
        <taxon>Methanococcales</taxon>
        <taxon>Methanococcaceae</taxon>
        <taxon>Methanococcus</taxon>
    </lineage>
</organism>
<gene>
    <name evidence="1" type="primary">hisC</name>
    <name type="ordered locus">MmarC5_0374</name>
</gene>
<feature type="chain" id="PRO_0000319798" description="Histidinol-phosphate aminotransferase">
    <location>
        <begin position="1"/>
        <end position="371"/>
    </location>
</feature>
<feature type="modified residue" description="N6-(pyridoxal phosphate)lysine" evidence="1">
    <location>
        <position position="228"/>
    </location>
</feature>